<organism>
    <name type="scientific">Natranaerobius thermophilus (strain ATCC BAA-1301 / DSM 18059 / JW/NM-WN-LF)</name>
    <dbReference type="NCBI Taxonomy" id="457570"/>
    <lineage>
        <taxon>Bacteria</taxon>
        <taxon>Bacillati</taxon>
        <taxon>Bacillota</taxon>
        <taxon>Clostridia</taxon>
        <taxon>Natranaerobiales</taxon>
        <taxon>Natranaerobiaceae</taxon>
        <taxon>Natranaerobius</taxon>
    </lineage>
</organism>
<name>GATC_NATTJ</name>
<proteinExistence type="inferred from homology"/>
<sequence length="95" mass="11056">MKVSKEEVLHVAKLGQLDLDQEEVEMFQDKLSQILEWQEKLDELDLEGLEPTAHALERRNVTREDQVHNSLTNDKALENAPETEGNYFKVPRIIE</sequence>
<reference key="1">
    <citation type="submission" date="2008-04" db="EMBL/GenBank/DDBJ databases">
        <title>Complete sequence of chromosome of Natranaerobius thermophilus JW/NM-WN-LF.</title>
        <authorList>
            <consortium name="US DOE Joint Genome Institute"/>
            <person name="Copeland A."/>
            <person name="Lucas S."/>
            <person name="Lapidus A."/>
            <person name="Glavina del Rio T."/>
            <person name="Dalin E."/>
            <person name="Tice H."/>
            <person name="Bruce D."/>
            <person name="Goodwin L."/>
            <person name="Pitluck S."/>
            <person name="Chertkov O."/>
            <person name="Brettin T."/>
            <person name="Detter J.C."/>
            <person name="Han C."/>
            <person name="Kuske C.R."/>
            <person name="Schmutz J."/>
            <person name="Larimer F."/>
            <person name="Land M."/>
            <person name="Hauser L."/>
            <person name="Kyrpides N."/>
            <person name="Lykidis A."/>
            <person name="Mesbah N.M."/>
            <person name="Wiegel J."/>
        </authorList>
    </citation>
    <scope>NUCLEOTIDE SEQUENCE [LARGE SCALE GENOMIC DNA]</scope>
    <source>
        <strain>ATCC BAA-1301 / DSM 18059 / JW/NM-WN-LF</strain>
    </source>
</reference>
<gene>
    <name evidence="1" type="primary">gatC</name>
    <name type="ordered locus">Nther_0463</name>
</gene>
<dbReference type="EC" id="6.3.5.-" evidence="1"/>
<dbReference type="EMBL" id="CP001034">
    <property type="protein sequence ID" value="ACB84059.1"/>
    <property type="molecule type" value="Genomic_DNA"/>
</dbReference>
<dbReference type="RefSeq" id="WP_012446946.1">
    <property type="nucleotide sequence ID" value="NC_010718.1"/>
</dbReference>
<dbReference type="SMR" id="B2A5W6"/>
<dbReference type="FunCoup" id="B2A5W6">
    <property type="interactions" value="401"/>
</dbReference>
<dbReference type="STRING" id="457570.Nther_0463"/>
<dbReference type="KEGG" id="nth:Nther_0463"/>
<dbReference type="eggNOG" id="COG0721">
    <property type="taxonomic scope" value="Bacteria"/>
</dbReference>
<dbReference type="HOGENOM" id="CLU_105899_6_1_9"/>
<dbReference type="InParanoid" id="B2A5W6"/>
<dbReference type="OrthoDB" id="9813938at2"/>
<dbReference type="Proteomes" id="UP000001683">
    <property type="component" value="Chromosome"/>
</dbReference>
<dbReference type="GO" id="GO:0050566">
    <property type="term" value="F:asparaginyl-tRNA synthase (glutamine-hydrolyzing) activity"/>
    <property type="evidence" value="ECO:0007669"/>
    <property type="project" value="RHEA"/>
</dbReference>
<dbReference type="GO" id="GO:0005524">
    <property type="term" value="F:ATP binding"/>
    <property type="evidence" value="ECO:0007669"/>
    <property type="project" value="UniProtKB-KW"/>
</dbReference>
<dbReference type="GO" id="GO:0050567">
    <property type="term" value="F:glutaminyl-tRNA synthase (glutamine-hydrolyzing) activity"/>
    <property type="evidence" value="ECO:0007669"/>
    <property type="project" value="UniProtKB-UniRule"/>
</dbReference>
<dbReference type="GO" id="GO:0070681">
    <property type="term" value="P:glutaminyl-tRNAGln biosynthesis via transamidation"/>
    <property type="evidence" value="ECO:0007669"/>
    <property type="project" value="TreeGrafter"/>
</dbReference>
<dbReference type="GO" id="GO:0006450">
    <property type="term" value="P:regulation of translational fidelity"/>
    <property type="evidence" value="ECO:0007669"/>
    <property type="project" value="InterPro"/>
</dbReference>
<dbReference type="GO" id="GO:0006412">
    <property type="term" value="P:translation"/>
    <property type="evidence" value="ECO:0007669"/>
    <property type="project" value="UniProtKB-UniRule"/>
</dbReference>
<dbReference type="Gene3D" id="1.10.20.60">
    <property type="entry name" value="Glu-tRNAGln amidotransferase C subunit, N-terminal domain"/>
    <property type="match status" value="1"/>
</dbReference>
<dbReference type="HAMAP" id="MF_00122">
    <property type="entry name" value="GatC"/>
    <property type="match status" value="1"/>
</dbReference>
<dbReference type="InterPro" id="IPR036113">
    <property type="entry name" value="Asp/Glu-ADT_sf_sub_c"/>
</dbReference>
<dbReference type="InterPro" id="IPR003837">
    <property type="entry name" value="GatC"/>
</dbReference>
<dbReference type="NCBIfam" id="TIGR00135">
    <property type="entry name" value="gatC"/>
    <property type="match status" value="1"/>
</dbReference>
<dbReference type="PANTHER" id="PTHR15004">
    <property type="entry name" value="GLUTAMYL-TRNA(GLN) AMIDOTRANSFERASE SUBUNIT C, MITOCHONDRIAL"/>
    <property type="match status" value="1"/>
</dbReference>
<dbReference type="PANTHER" id="PTHR15004:SF0">
    <property type="entry name" value="GLUTAMYL-TRNA(GLN) AMIDOTRANSFERASE SUBUNIT C, MITOCHONDRIAL"/>
    <property type="match status" value="1"/>
</dbReference>
<dbReference type="Pfam" id="PF02686">
    <property type="entry name" value="GatC"/>
    <property type="match status" value="1"/>
</dbReference>
<dbReference type="SUPFAM" id="SSF141000">
    <property type="entry name" value="Glu-tRNAGln amidotransferase C subunit"/>
    <property type="match status" value="1"/>
</dbReference>
<protein>
    <recommendedName>
        <fullName evidence="1">Aspartyl/glutamyl-tRNA(Asn/Gln) amidotransferase subunit C</fullName>
        <shortName evidence="1">Asp/Glu-ADT subunit C</shortName>
        <ecNumber evidence="1">6.3.5.-</ecNumber>
    </recommendedName>
</protein>
<accession>B2A5W6</accession>
<feature type="chain" id="PRO_1000117635" description="Aspartyl/glutamyl-tRNA(Asn/Gln) amidotransferase subunit C">
    <location>
        <begin position="1"/>
        <end position="95"/>
    </location>
</feature>
<feature type="region of interest" description="Disordered" evidence="2">
    <location>
        <begin position="55"/>
        <end position="83"/>
    </location>
</feature>
<feature type="compositionally biased region" description="Basic and acidic residues" evidence="2">
    <location>
        <begin position="55"/>
        <end position="67"/>
    </location>
</feature>
<keyword id="KW-0067">ATP-binding</keyword>
<keyword id="KW-0436">Ligase</keyword>
<keyword id="KW-0547">Nucleotide-binding</keyword>
<keyword id="KW-0648">Protein biosynthesis</keyword>
<keyword id="KW-1185">Reference proteome</keyword>
<comment type="function">
    <text evidence="1">Allows the formation of correctly charged Asn-tRNA(Asn) or Gln-tRNA(Gln) through the transamidation of misacylated Asp-tRNA(Asn) or Glu-tRNA(Gln) in organisms which lack either or both of asparaginyl-tRNA or glutaminyl-tRNA synthetases. The reaction takes place in the presence of glutamine and ATP through an activated phospho-Asp-tRNA(Asn) or phospho-Glu-tRNA(Gln).</text>
</comment>
<comment type="catalytic activity">
    <reaction evidence="1">
        <text>L-glutamyl-tRNA(Gln) + L-glutamine + ATP + H2O = L-glutaminyl-tRNA(Gln) + L-glutamate + ADP + phosphate + H(+)</text>
        <dbReference type="Rhea" id="RHEA:17521"/>
        <dbReference type="Rhea" id="RHEA-COMP:9681"/>
        <dbReference type="Rhea" id="RHEA-COMP:9684"/>
        <dbReference type="ChEBI" id="CHEBI:15377"/>
        <dbReference type="ChEBI" id="CHEBI:15378"/>
        <dbReference type="ChEBI" id="CHEBI:29985"/>
        <dbReference type="ChEBI" id="CHEBI:30616"/>
        <dbReference type="ChEBI" id="CHEBI:43474"/>
        <dbReference type="ChEBI" id="CHEBI:58359"/>
        <dbReference type="ChEBI" id="CHEBI:78520"/>
        <dbReference type="ChEBI" id="CHEBI:78521"/>
        <dbReference type="ChEBI" id="CHEBI:456216"/>
    </reaction>
</comment>
<comment type="catalytic activity">
    <reaction evidence="1">
        <text>L-aspartyl-tRNA(Asn) + L-glutamine + ATP + H2O = L-asparaginyl-tRNA(Asn) + L-glutamate + ADP + phosphate + 2 H(+)</text>
        <dbReference type="Rhea" id="RHEA:14513"/>
        <dbReference type="Rhea" id="RHEA-COMP:9674"/>
        <dbReference type="Rhea" id="RHEA-COMP:9677"/>
        <dbReference type="ChEBI" id="CHEBI:15377"/>
        <dbReference type="ChEBI" id="CHEBI:15378"/>
        <dbReference type="ChEBI" id="CHEBI:29985"/>
        <dbReference type="ChEBI" id="CHEBI:30616"/>
        <dbReference type="ChEBI" id="CHEBI:43474"/>
        <dbReference type="ChEBI" id="CHEBI:58359"/>
        <dbReference type="ChEBI" id="CHEBI:78515"/>
        <dbReference type="ChEBI" id="CHEBI:78516"/>
        <dbReference type="ChEBI" id="CHEBI:456216"/>
    </reaction>
</comment>
<comment type="subunit">
    <text evidence="1">Heterotrimer of A, B and C subunits.</text>
</comment>
<comment type="similarity">
    <text evidence="1">Belongs to the GatC family.</text>
</comment>
<evidence type="ECO:0000255" key="1">
    <source>
        <dbReference type="HAMAP-Rule" id="MF_00122"/>
    </source>
</evidence>
<evidence type="ECO:0000256" key="2">
    <source>
        <dbReference type="SAM" id="MobiDB-lite"/>
    </source>
</evidence>